<keyword id="KW-0030">Aminoacyl-tRNA synthetase</keyword>
<keyword id="KW-0067">ATP-binding</keyword>
<keyword id="KW-0963">Cytoplasm</keyword>
<keyword id="KW-0436">Ligase</keyword>
<keyword id="KW-0479">Metal-binding</keyword>
<keyword id="KW-0547">Nucleotide-binding</keyword>
<keyword id="KW-0648">Protein biosynthesis</keyword>
<keyword id="KW-1185">Reference proteome</keyword>
<keyword id="KW-0862">Zinc</keyword>
<dbReference type="EC" id="6.1.1.5" evidence="1"/>
<dbReference type="EMBL" id="AL935263">
    <property type="protein sequence ID" value="CCC79407.1"/>
    <property type="molecule type" value="Genomic_DNA"/>
</dbReference>
<dbReference type="RefSeq" id="WP_011101679.1">
    <property type="nucleotide sequence ID" value="NC_004567.2"/>
</dbReference>
<dbReference type="RefSeq" id="YP_004889921.1">
    <property type="nucleotide sequence ID" value="NC_004567.2"/>
</dbReference>
<dbReference type="SMR" id="Q88V89"/>
<dbReference type="STRING" id="220668.lp_2187"/>
<dbReference type="EnsemblBacteria" id="CCC79407">
    <property type="protein sequence ID" value="CCC79407"/>
    <property type="gene ID" value="lp_2187"/>
</dbReference>
<dbReference type="KEGG" id="lpl:lp_2187"/>
<dbReference type="PATRIC" id="fig|220668.9.peg.1848"/>
<dbReference type="eggNOG" id="COG0060">
    <property type="taxonomic scope" value="Bacteria"/>
</dbReference>
<dbReference type="HOGENOM" id="CLU_001493_7_1_9"/>
<dbReference type="OrthoDB" id="9810365at2"/>
<dbReference type="PhylomeDB" id="Q88V89"/>
<dbReference type="Proteomes" id="UP000000432">
    <property type="component" value="Chromosome"/>
</dbReference>
<dbReference type="GO" id="GO:0005829">
    <property type="term" value="C:cytosol"/>
    <property type="evidence" value="ECO:0007669"/>
    <property type="project" value="TreeGrafter"/>
</dbReference>
<dbReference type="GO" id="GO:0002161">
    <property type="term" value="F:aminoacyl-tRNA deacylase activity"/>
    <property type="evidence" value="ECO:0007669"/>
    <property type="project" value="InterPro"/>
</dbReference>
<dbReference type="GO" id="GO:0005524">
    <property type="term" value="F:ATP binding"/>
    <property type="evidence" value="ECO:0007669"/>
    <property type="project" value="UniProtKB-UniRule"/>
</dbReference>
<dbReference type="GO" id="GO:0004822">
    <property type="term" value="F:isoleucine-tRNA ligase activity"/>
    <property type="evidence" value="ECO:0007669"/>
    <property type="project" value="UniProtKB-UniRule"/>
</dbReference>
<dbReference type="GO" id="GO:0000049">
    <property type="term" value="F:tRNA binding"/>
    <property type="evidence" value="ECO:0007669"/>
    <property type="project" value="InterPro"/>
</dbReference>
<dbReference type="GO" id="GO:0008270">
    <property type="term" value="F:zinc ion binding"/>
    <property type="evidence" value="ECO:0007669"/>
    <property type="project" value="UniProtKB-UniRule"/>
</dbReference>
<dbReference type="GO" id="GO:0006428">
    <property type="term" value="P:isoleucyl-tRNA aminoacylation"/>
    <property type="evidence" value="ECO:0007669"/>
    <property type="project" value="UniProtKB-UniRule"/>
</dbReference>
<dbReference type="CDD" id="cd07960">
    <property type="entry name" value="Anticodon_Ia_Ile_BEm"/>
    <property type="match status" value="1"/>
</dbReference>
<dbReference type="CDD" id="cd00818">
    <property type="entry name" value="IleRS_core"/>
    <property type="match status" value="1"/>
</dbReference>
<dbReference type="FunFam" id="1.10.10.830:FF:000001">
    <property type="entry name" value="Isoleucine--tRNA ligase"/>
    <property type="match status" value="1"/>
</dbReference>
<dbReference type="FunFam" id="1.10.730.20:FF:000001">
    <property type="entry name" value="Isoleucine--tRNA ligase"/>
    <property type="match status" value="1"/>
</dbReference>
<dbReference type="FunFam" id="3.40.50.620:FF:000152">
    <property type="entry name" value="Isoleucine--tRNA ligase"/>
    <property type="match status" value="1"/>
</dbReference>
<dbReference type="FunFam" id="3.90.740.10:FF:000006">
    <property type="entry name" value="Isoleucine--tRNA ligase"/>
    <property type="match status" value="1"/>
</dbReference>
<dbReference type="Gene3D" id="1.10.730.20">
    <property type="match status" value="1"/>
</dbReference>
<dbReference type="Gene3D" id="3.40.50.620">
    <property type="entry name" value="HUPs"/>
    <property type="match status" value="2"/>
</dbReference>
<dbReference type="Gene3D" id="1.10.10.830">
    <property type="entry name" value="Ile-tRNA synthetase CP2 domain-like"/>
    <property type="match status" value="1"/>
</dbReference>
<dbReference type="Gene3D" id="3.90.740.10">
    <property type="entry name" value="Valyl/Leucyl/Isoleucyl-tRNA synthetase, editing domain"/>
    <property type="match status" value="1"/>
</dbReference>
<dbReference type="HAMAP" id="MF_02002">
    <property type="entry name" value="Ile_tRNA_synth_type1"/>
    <property type="match status" value="1"/>
</dbReference>
<dbReference type="InterPro" id="IPR001412">
    <property type="entry name" value="aa-tRNA-synth_I_CS"/>
</dbReference>
<dbReference type="InterPro" id="IPR002300">
    <property type="entry name" value="aa-tRNA-synth_Ia"/>
</dbReference>
<dbReference type="InterPro" id="IPR033708">
    <property type="entry name" value="Anticodon_Ile_BEm"/>
</dbReference>
<dbReference type="InterPro" id="IPR002301">
    <property type="entry name" value="Ile-tRNA-ligase"/>
</dbReference>
<dbReference type="InterPro" id="IPR023585">
    <property type="entry name" value="Ile-tRNA-ligase_type1"/>
</dbReference>
<dbReference type="InterPro" id="IPR050081">
    <property type="entry name" value="Ile-tRNA_ligase"/>
</dbReference>
<dbReference type="InterPro" id="IPR013155">
    <property type="entry name" value="M/V/L/I-tRNA-synth_anticd-bd"/>
</dbReference>
<dbReference type="InterPro" id="IPR014729">
    <property type="entry name" value="Rossmann-like_a/b/a_fold"/>
</dbReference>
<dbReference type="InterPro" id="IPR009080">
    <property type="entry name" value="tRNAsynth_Ia_anticodon-bd"/>
</dbReference>
<dbReference type="InterPro" id="IPR009008">
    <property type="entry name" value="Val/Leu/Ile-tRNA-synth_edit"/>
</dbReference>
<dbReference type="InterPro" id="IPR010663">
    <property type="entry name" value="Znf_FPG/IleRS"/>
</dbReference>
<dbReference type="NCBIfam" id="TIGR00392">
    <property type="entry name" value="ileS"/>
    <property type="match status" value="1"/>
</dbReference>
<dbReference type="PANTHER" id="PTHR42765:SF1">
    <property type="entry name" value="ISOLEUCINE--TRNA LIGASE, MITOCHONDRIAL"/>
    <property type="match status" value="1"/>
</dbReference>
<dbReference type="PANTHER" id="PTHR42765">
    <property type="entry name" value="SOLEUCYL-TRNA SYNTHETASE"/>
    <property type="match status" value="1"/>
</dbReference>
<dbReference type="Pfam" id="PF08264">
    <property type="entry name" value="Anticodon_1"/>
    <property type="match status" value="1"/>
</dbReference>
<dbReference type="Pfam" id="PF00133">
    <property type="entry name" value="tRNA-synt_1"/>
    <property type="match status" value="1"/>
</dbReference>
<dbReference type="Pfam" id="PF06827">
    <property type="entry name" value="zf-FPG_IleRS"/>
    <property type="match status" value="1"/>
</dbReference>
<dbReference type="PRINTS" id="PR00984">
    <property type="entry name" value="TRNASYNTHILE"/>
</dbReference>
<dbReference type="SUPFAM" id="SSF47323">
    <property type="entry name" value="Anticodon-binding domain of a subclass of class I aminoacyl-tRNA synthetases"/>
    <property type="match status" value="1"/>
</dbReference>
<dbReference type="SUPFAM" id="SSF52374">
    <property type="entry name" value="Nucleotidylyl transferase"/>
    <property type="match status" value="1"/>
</dbReference>
<dbReference type="SUPFAM" id="SSF50677">
    <property type="entry name" value="ValRS/IleRS/LeuRS editing domain"/>
    <property type="match status" value="1"/>
</dbReference>
<dbReference type="PROSITE" id="PS00178">
    <property type="entry name" value="AA_TRNA_LIGASE_I"/>
    <property type="match status" value="1"/>
</dbReference>
<accession>Q88V89</accession>
<accession>F9UQB8</accession>
<name>SYI_LACPL</name>
<gene>
    <name evidence="1" type="primary">ileS</name>
    <name type="ordered locus">lp_2187</name>
</gene>
<proteinExistence type="inferred from homology"/>
<organism>
    <name type="scientific">Lactiplantibacillus plantarum (strain ATCC BAA-793 / NCIMB 8826 / WCFS1)</name>
    <name type="common">Lactobacillus plantarum</name>
    <dbReference type="NCBI Taxonomy" id="220668"/>
    <lineage>
        <taxon>Bacteria</taxon>
        <taxon>Bacillati</taxon>
        <taxon>Bacillota</taxon>
        <taxon>Bacilli</taxon>
        <taxon>Lactobacillales</taxon>
        <taxon>Lactobacillaceae</taxon>
        <taxon>Lactiplantibacillus</taxon>
    </lineage>
</organism>
<evidence type="ECO:0000255" key="1">
    <source>
        <dbReference type="HAMAP-Rule" id="MF_02002"/>
    </source>
</evidence>
<reference key="1">
    <citation type="journal article" date="2003" name="Proc. Natl. Acad. Sci. U.S.A.">
        <title>Complete genome sequence of Lactobacillus plantarum WCFS1.</title>
        <authorList>
            <person name="Kleerebezem M."/>
            <person name="Boekhorst J."/>
            <person name="van Kranenburg R."/>
            <person name="Molenaar D."/>
            <person name="Kuipers O.P."/>
            <person name="Leer R."/>
            <person name="Tarchini R."/>
            <person name="Peters S.A."/>
            <person name="Sandbrink H.M."/>
            <person name="Fiers M.W.E.J."/>
            <person name="Stiekema W."/>
            <person name="Klein Lankhorst R.M."/>
            <person name="Bron P.A."/>
            <person name="Hoffer S.M."/>
            <person name="Nierop Groot M.N."/>
            <person name="Kerkhoven R."/>
            <person name="De Vries M."/>
            <person name="Ursing B."/>
            <person name="De Vos W.M."/>
            <person name="Siezen R.J."/>
        </authorList>
    </citation>
    <scope>NUCLEOTIDE SEQUENCE [LARGE SCALE GENOMIC DNA]</scope>
    <source>
        <strain>ATCC BAA-793 / NCIMB 8826 / WCFS1</strain>
    </source>
</reference>
<reference key="2">
    <citation type="journal article" date="2012" name="J. Bacteriol.">
        <title>Complete resequencing and reannotation of the Lactobacillus plantarum WCFS1 genome.</title>
        <authorList>
            <person name="Siezen R.J."/>
            <person name="Francke C."/>
            <person name="Renckens B."/>
            <person name="Boekhorst J."/>
            <person name="Wels M."/>
            <person name="Kleerebezem M."/>
            <person name="van Hijum S.A."/>
        </authorList>
    </citation>
    <scope>NUCLEOTIDE SEQUENCE [LARGE SCALE GENOMIC DNA]</scope>
    <scope>GENOME REANNOTATION</scope>
    <source>
        <strain>ATCC BAA-793 / NCIMB 8826 / WCFS1</strain>
    </source>
</reference>
<feature type="chain" id="PRO_0000098403" description="Isoleucine--tRNA ligase">
    <location>
        <begin position="1"/>
        <end position="932"/>
    </location>
</feature>
<feature type="short sequence motif" description="'HIGH' region">
    <location>
        <begin position="57"/>
        <end position="67"/>
    </location>
</feature>
<feature type="short sequence motif" description="'KMSKS' region">
    <location>
        <begin position="597"/>
        <end position="601"/>
    </location>
</feature>
<feature type="binding site" evidence="1">
    <location>
        <position position="556"/>
    </location>
    <ligand>
        <name>L-isoleucyl-5'-AMP</name>
        <dbReference type="ChEBI" id="CHEBI:178002"/>
    </ligand>
</feature>
<feature type="binding site" evidence="1">
    <location>
        <position position="600"/>
    </location>
    <ligand>
        <name>ATP</name>
        <dbReference type="ChEBI" id="CHEBI:30616"/>
    </ligand>
</feature>
<feature type="binding site" evidence="1">
    <location>
        <position position="891"/>
    </location>
    <ligand>
        <name>Zn(2+)</name>
        <dbReference type="ChEBI" id="CHEBI:29105"/>
    </ligand>
</feature>
<feature type="binding site" evidence="1">
    <location>
        <position position="894"/>
    </location>
    <ligand>
        <name>Zn(2+)</name>
        <dbReference type="ChEBI" id="CHEBI:29105"/>
    </ligand>
</feature>
<feature type="binding site" evidence="1">
    <location>
        <position position="911"/>
    </location>
    <ligand>
        <name>Zn(2+)</name>
        <dbReference type="ChEBI" id="CHEBI:29105"/>
    </ligand>
</feature>
<feature type="binding site" evidence="1">
    <location>
        <position position="914"/>
    </location>
    <ligand>
        <name>Zn(2+)</name>
        <dbReference type="ChEBI" id="CHEBI:29105"/>
    </ligand>
</feature>
<comment type="function">
    <text evidence="1">Catalyzes the attachment of isoleucine to tRNA(Ile). As IleRS can inadvertently accommodate and process structurally similar amino acids such as valine, to avoid such errors it has two additional distinct tRNA(Ile)-dependent editing activities. One activity is designated as 'pretransfer' editing and involves the hydrolysis of activated Val-AMP. The other activity is designated 'posttransfer' editing and involves deacylation of mischarged Val-tRNA(Ile).</text>
</comment>
<comment type="catalytic activity">
    <reaction evidence="1">
        <text>tRNA(Ile) + L-isoleucine + ATP = L-isoleucyl-tRNA(Ile) + AMP + diphosphate</text>
        <dbReference type="Rhea" id="RHEA:11060"/>
        <dbReference type="Rhea" id="RHEA-COMP:9666"/>
        <dbReference type="Rhea" id="RHEA-COMP:9695"/>
        <dbReference type="ChEBI" id="CHEBI:30616"/>
        <dbReference type="ChEBI" id="CHEBI:33019"/>
        <dbReference type="ChEBI" id="CHEBI:58045"/>
        <dbReference type="ChEBI" id="CHEBI:78442"/>
        <dbReference type="ChEBI" id="CHEBI:78528"/>
        <dbReference type="ChEBI" id="CHEBI:456215"/>
        <dbReference type="EC" id="6.1.1.5"/>
    </reaction>
</comment>
<comment type="cofactor">
    <cofactor evidence="1">
        <name>Zn(2+)</name>
        <dbReference type="ChEBI" id="CHEBI:29105"/>
    </cofactor>
    <text evidence="1">Binds 1 zinc ion per subunit.</text>
</comment>
<comment type="subunit">
    <text evidence="1">Monomer.</text>
</comment>
<comment type="subcellular location">
    <subcellularLocation>
        <location evidence="1">Cytoplasm</location>
    </subcellularLocation>
</comment>
<comment type="domain">
    <text evidence="1">IleRS has two distinct active sites: one for aminoacylation and one for editing. The misactivated valine is translocated from the active site to the editing site, which sterically excludes the correctly activated isoleucine. The single editing site contains two valyl binding pockets, one specific for each substrate (Val-AMP or Val-tRNA(Ile)).</text>
</comment>
<comment type="similarity">
    <text evidence="1">Belongs to the class-I aminoacyl-tRNA synthetase family. IleS type 1 subfamily.</text>
</comment>
<protein>
    <recommendedName>
        <fullName evidence="1">Isoleucine--tRNA ligase</fullName>
        <ecNumber evidence="1">6.1.1.5</ecNumber>
    </recommendedName>
    <alternativeName>
        <fullName evidence="1">Isoleucyl-tRNA synthetase</fullName>
        <shortName evidence="1">IleRS</shortName>
    </alternativeName>
</protein>
<sequence>MRVKETLNLGKTKFKMRGNLPVKEVERQNVWAENKVYEQRQKLNEGKPSFILHDGPPYANGDIHMGHALNKITKDFIVRYKSMNGFRAPYVPGWDTHGLPIEQKLKQAGYDRKKMTDNEFRELCRKYALEQVDRQRDEFKRLGVAGEWDNPYLTLKPEFEAAQVRVFGAFAKRHLIYRGQKPVFWSWSSESALAEAEVEYHDVTSPSAFYGEHVIDGKGVLDDDTYMVVWTTTPWTIPASEGITIDASFDYVVVQPAGENRKFVLAAELLDENAERFGWEDVQVLKTVKGAELENILCEHPFDNSRHLVTMLGDFVTLDSGTGLVHTAPGYGEDDYRIGKQYDLPIFAPVDDKGFLTAEAGDDFAGVFYDDANKIALDKLKAAGLLLKYMPYEHSYPFDWRTKKPIIFRATPQWFASVGDMRDEILKSMDDVEFFPEWGKKRLYNMIRDRGDWVISRQRVWGVPLPIFYAEDGTAIMDEVTINHVADLFGKYGSNVWFERDAKDLLPDGYTNEHSPNGTFTKETDIMDVWFDSGSSHQGVLAERSYLDYPADLYLEGSDQYRGWFNSSLITSVAVSGHAPYKQVLSQGFTLDNQGRKMSKSLGNTIAPADVIKQMGAEIVRMWVASVDTSSDVRVSMESFKQVADSYKKFRNTVRFMLGNTADFDPKANRVAYEDLASVDQYMETRLNEFVAETKDHYDHYDFLDIYKKLINFLTVDLSNFYLDIAKDIMYIDAEDSHSRRSMQTVFYDVLVALTKLFTPMLPHTTEEIWPFLKEPEEFAQLAEMPAVQNYANSDELMAQWTRFMDLRSNVLKALEEARDAKLIGKSLEAHLDLYVDDDTQAFLDHLNTNVRQMLMVSALDLHALSDAPEDAETFGDTLAIKVGHADGDVCDRCRMVKTDVGSDEAYPMLCARCAAIVRENYPESVTTGLEA</sequence>